<protein>
    <recommendedName>
        <fullName evidence="1">Ribosome-binding factor A</fullName>
    </recommendedName>
</protein>
<accession>Q2RMR9</accession>
<dbReference type="EMBL" id="CP000230">
    <property type="protein sequence ID" value="ABC24576.1"/>
    <property type="molecule type" value="Genomic_DNA"/>
</dbReference>
<dbReference type="RefSeq" id="WP_011391529.1">
    <property type="nucleotide sequence ID" value="NC_007643.1"/>
</dbReference>
<dbReference type="RefSeq" id="YP_428863.1">
    <property type="nucleotide sequence ID" value="NC_007643.1"/>
</dbReference>
<dbReference type="SMR" id="Q2RMR9"/>
<dbReference type="STRING" id="269796.Rru_A3782"/>
<dbReference type="EnsemblBacteria" id="ABC24576">
    <property type="protein sequence ID" value="ABC24576"/>
    <property type="gene ID" value="Rru_A3782"/>
</dbReference>
<dbReference type="KEGG" id="rru:Rru_A3782"/>
<dbReference type="PATRIC" id="fig|269796.9.peg.3904"/>
<dbReference type="eggNOG" id="COG0858">
    <property type="taxonomic scope" value="Bacteria"/>
</dbReference>
<dbReference type="HOGENOM" id="CLU_089475_1_0_5"/>
<dbReference type="PhylomeDB" id="Q2RMR9"/>
<dbReference type="Proteomes" id="UP000001929">
    <property type="component" value="Chromosome"/>
</dbReference>
<dbReference type="GO" id="GO:0005829">
    <property type="term" value="C:cytosol"/>
    <property type="evidence" value="ECO:0007669"/>
    <property type="project" value="TreeGrafter"/>
</dbReference>
<dbReference type="GO" id="GO:0043024">
    <property type="term" value="F:ribosomal small subunit binding"/>
    <property type="evidence" value="ECO:0007669"/>
    <property type="project" value="TreeGrafter"/>
</dbReference>
<dbReference type="GO" id="GO:0030490">
    <property type="term" value="P:maturation of SSU-rRNA"/>
    <property type="evidence" value="ECO:0007669"/>
    <property type="project" value="UniProtKB-UniRule"/>
</dbReference>
<dbReference type="Gene3D" id="3.30.300.20">
    <property type="match status" value="1"/>
</dbReference>
<dbReference type="HAMAP" id="MF_00003">
    <property type="entry name" value="RbfA"/>
    <property type="match status" value="1"/>
</dbReference>
<dbReference type="InterPro" id="IPR015946">
    <property type="entry name" value="KH_dom-like_a/b"/>
</dbReference>
<dbReference type="InterPro" id="IPR000238">
    <property type="entry name" value="RbfA"/>
</dbReference>
<dbReference type="InterPro" id="IPR023799">
    <property type="entry name" value="RbfA_dom_sf"/>
</dbReference>
<dbReference type="NCBIfam" id="NF001802">
    <property type="entry name" value="PRK00521.2-5"/>
    <property type="match status" value="1"/>
</dbReference>
<dbReference type="NCBIfam" id="TIGR00082">
    <property type="entry name" value="rbfA"/>
    <property type="match status" value="1"/>
</dbReference>
<dbReference type="PANTHER" id="PTHR33515">
    <property type="entry name" value="RIBOSOME-BINDING FACTOR A, CHLOROPLASTIC-RELATED"/>
    <property type="match status" value="1"/>
</dbReference>
<dbReference type="PANTHER" id="PTHR33515:SF1">
    <property type="entry name" value="RIBOSOME-BINDING FACTOR A, CHLOROPLASTIC-RELATED"/>
    <property type="match status" value="1"/>
</dbReference>
<dbReference type="Pfam" id="PF02033">
    <property type="entry name" value="RBFA"/>
    <property type="match status" value="1"/>
</dbReference>
<dbReference type="SUPFAM" id="SSF89919">
    <property type="entry name" value="Ribosome-binding factor A, RbfA"/>
    <property type="match status" value="1"/>
</dbReference>
<keyword id="KW-0963">Cytoplasm</keyword>
<keyword id="KW-1185">Reference proteome</keyword>
<keyword id="KW-0690">Ribosome biogenesis</keyword>
<gene>
    <name evidence="1" type="primary">rbfA</name>
    <name type="ordered locus">Rru_A3782</name>
</gene>
<organism>
    <name type="scientific">Rhodospirillum rubrum (strain ATCC 11170 / ATH 1.1.1 / DSM 467 / LMG 4362 / NCIMB 8255 / S1)</name>
    <dbReference type="NCBI Taxonomy" id="269796"/>
    <lineage>
        <taxon>Bacteria</taxon>
        <taxon>Pseudomonadati</taxon>
        <taxon>Pseudomonadota</taxon>
        <taxon>Alphaproteobacteria</taxon>
        <taxon>Rhodospirillales</taxon>
        <taxon>Rhodospirillaceae</taxon>
        <taxon>Rhodospirillum</taxon>
    </lineage>
</organism>
<reference key="1">
    <citation type="journal article" date="2011" name="Stand. Genomic Sci.">
        <title>Complete genome sequence of Rhodospirillum rubrum type strain (S1).</title>
        <authorList>
            <person name="Munk A.C."/>
            <person name="Copeland A."/>
            <person name="Lucas S."/>
            <person name="Lapidus A."/>
            <person name="Del Rio T.G."/>
            <person name="Barry K."/>
            <person name="Detter J.C."/>
            <person name="Hammon N."/>
            <person name="Israni S."/>
            <person name="Pitluck S."/>
            <person name="Brettin T."/>
            <person name="Bruce D."/>
            <person name="Han C."/>
            <person name="Tapia R."/>
            <person name="Gilna P."/>
            <person name="Schmutz J."/>
            <person name="Larimer F."/>
            <person name="Land M."/>
            <person name="Kyrpides N.C."/>
            <person name="Mavromatis K."/>
            <person name="Richardson P."/>
            <person name="Rohde M."/>
            <person name="Goeker M."/>
            <person name="Klenk H.P."/>
            <person name="Zhang Y."/>
            <person name="Roberts G.P."/>
            <person name="Reslewic S."/>
            <person name="Schwartz D.C."/>
        </authorList>
    </citation>
    <scope>NUCLEOTIDE SEQUENCE [LARGE SCALE GENOMIC DNA]</scope>
    <source>
        <strain>ATCC 11170 / ATH 1.1.1 / DSM 467 / LMG 4362 / NCIMB 8255 / S1</strain>
    </source>
</reference>
<name>RBFA_RHORT</name>
<sequence>MTRTSDKAPTQRQLRVGEEIRHALAEVFERGTVRDPAVAGVALTVTEVRISPDLRNATVFLVRLGGGPLDEVLTGLRKARAFLRREVAIRIHTKFVPDLRFESDPSFDYAEYINGLLHRPEVARDLGVPPSGEDDGDDEADDEDDDGGEEGPGAAAPPPADEGR</sequence>
<comment type="function">
    <text evidence="1">One of several proteins that assist in the late maturation steps of the functional core of the 30S ribosomal subunit. Associates with free 30S ribosomal subunits (but not with 30S subunits that are part of 70S ribosomes or polysomes). Required for efficient processing of 16S rRNA. May interact with the 5'-terminal helix region of 16S rRNA.</text>
</comment>
<comment type="subunit">
    <text evidence="1">Monomer. Binds 30S ribosomal subunits, but not 50S ribosomal subunits or 70S ribosomes.</text>
</comment>
<comment type="subcellular location">
    <subcellularLocation>
        <location evidence="1">Cytoplasm</location>
    </subcellularLocation>
</comment>
<comment type="similarity">
    <text evidence="1">Belongs to the RbfA family.</text>
</comment>
<feature type="chain" id="PRO_0000321248" description="Ribosome-binding factor A">
    <location>
        <begin position="1"/>
        <end position="164"/>
    </location>
</feature>
<feature type="region of interest" description="Disordered" evidence="2">
    <location>
        <begin position="123"/>
        <end position="164"/>
    </location>
</feature>
<feature type="compositionally biased region" description="Acidic residues" evidence="2">
    <location>
        <begin position="132"/>
        <end position="149"/>
    </location>
</feature>
<feature type="compositionally biased region" description="Pro residues" evidence="2">
    <location>
        <begin position="155"/>
        <end position="164"/>
    </location>
</feature>
<evidence type="ECO:0000255" key="1">
    <source>
        <dbReference type="HAMAP-Rule" id="MF_00003"/>
    </source>
</evidence>
<evidence type="ECO:0000256" key="2">
    <source>
        <dbReference type="SAM" id="MobiDB-lite"/>
    </source>
</evidence>
<proteinExistence type="inferred from homology"/>